<organism>
    <name type="scientific">Symbiobacterium thermophilum (strain DSM 24528 / JCM 14929 / IAM 14863 / T)</name>
    <dbReference type="NCBI Taxonomy" id="292459"/>
    <lineage>
        <taxon>Bacteria</taxon>
        <taxon>Bacillati</taxon>
        <taxon>Bacillota</taxon>
        <taxon>Clostridia</taxon>
        <taxon>Eubacteriales</taxon>
        <taxon>Symbiobacteriaceae</taxon>
        <taxon>Symbiobacterium</taxon>
    </lineage>
</organism>
<gene>
    <name evidence="1" type="primary">leuS</name>
    <name type="ordered locus">STH444</name>
</gene>
<keyword id="KW-0030">Aminoacyl-tRNA synthetase</keyword>
<keyword id="KW-0067">ATP-binding</keyword>
<keyword id="KW-0963">Cytoplasm</keyword>
<keyword id="KW-0436">Ligase</keyword>
<keyword id="KW-0547">Nucleotide-binding</keyword>
<keyword id="KW-0648">Protein biosynthesis</keyword>
<keyword id="KW-1185">Reference proteome</keyword>
<dbReference type="EC" id="6.1.1.4" evidence="1"/>
<dbReference type="EMBL" id="AP006840">
    <property type="protein sequence ID" value="BAD39429.1"/>
    <property type="molecule type" value="Genomic_DNA"/>
</dbReference>
<dbReference type="RefSeq" id="WP_011194578.1">
    <property type="nucleotide sequence ID" value="NC_006177.1"/>
</dbReference>
<dbReference type="SMR" id="Q67SB4"/>
<dbReference type="STRING" id="292459.STH444"/>
<dbReference type="KEGG" id="sth:STH444"/>
<dbReference type="eggNOG" id="COG0495">
    <property type="taxonomic scope" value="Bacteria"/>
</dbReference>
<dbReference type="HOGENOM" id="CLU_004427_0_0_9"/>
<dbReference type="OrthoDB" id="9810365at2"/>
<dbReference type="Proteomes" id="UP000000417">
    <property type="component" value="Chromosome"/>
</dbReference>
<dbReference type="GO" id="GO:0005829">
    <property type="term" value="C:cytosol"/>
    <property type="evidence" value="ECO:0007669"/>
    <property type="project" value="TreeGrafter"/>
</dbReference>
<dbReference type="GO" id="GO:0002161">
    <property type="term" value="F:aminoacyl-tRNA deacylase activity"/>
    <property type="evidence" value="ECO:0007669"/>
    <property type="project" value="InterPro"/>
</dbReference>
<dbReference type="GO" id="GO:0005524">
    <property type="term" value="F:ATP binding"/>
    <property type="evidence" value="ECO:0007669"/>
    <property type="project" value="UniProtKB-UniRule"/>
</dbReference>
<dbReference type="GO" id="GO:0004823">
    <property type="term" value="F:leucine-tRNA ligase activity"/>
    <property type="evidence" value="ECO:0007669"/>
    <property type="project" value="UniProtKB-UniRule"/>
</dbReference>
<dbReference type="GO" id="GO:0006429">
    <property type="term" value="P:leucyl-tRNA aminoacylation"/>
    <property type="evidence" value="ECO:0007669"/>
    <property type="project" value="UniProtKB-UniRule"/>
</dbReference>
<dbReference type="CDD" id="cd07958">
    <property type="entry name" value="Anticodon_Ia_Leu_BEm"/>
    <property type="match status" value="1"/>
</dbReference>
<dbReference type="CDD" id="cd00812">
    <property type="entry name" value="LeuRS_core"/>
    <property type="match status" value="1"/>
</dbReference>
<dbReference type="FunFam" id="1.10.730.10:FF:000002">
    <property type="entry name" value="Leucine--tRNA ligase"/>
    <property type="match status" value="2"/>
</dbReference>
<dbReference type="FunFam" id="3.40.50.620:FF:000003">
    <property type="entry name" value="Leucine--tRNA ligase"/>
    <property type="match status" value="1"/>
</dbReference>
<dbReference type="FunFam" id="3.40.50.620:FF:000212">
    <property type="entry name" value="Leucine--tRNA ligase"/>
    <property type="match status" value="1"/>
</dbReference>
<dbReference type="Gene3D" id="3.10.20.590">
    <property type="match status" value="1"/>
</dbReference>
<dbReference type="Gene3D" id="3.40.50.620">
    <property type="entry name" value="HUPs"/>
    <property type="match status" value="2"/>
</dbReference>
<dbReference type="Gene3D" id="1.10.730.10">
    <property type="entry name" value="Isoleucyl-tRNA Synthetase, Domain 1"/>
    <property type="match status" value="1"/>
</dbReference>
<dbReference type="Gene3D" id="3.90.740.10">
    <property type="entry name" value="Valyl/Leucyl/Isoleucyl-tRNA synthetase, editing domain"/>
    <property type="match status" value="1"/>
</dbReference>
<dbReference type="HAMAP" id="MF_00049_B">
    <property type="entry name" value="Leu_tRNA_synth_B"/>
    <property type="match status" value="1"/>
</dbReference>
<dbReference type="InterPro" id="IPR001412">
    <property type="entry name" value="aa-tRNA-synth_I_CS"/>
</dbReference>
<dbReference type="InterPro" id="IPR002300">
    <property type="entry name" value="aa-tRNA-synth_Ia"/>
</dbReference>
<dbReference type="InterPro" id="IPR002302">
    <property type="entry name" value="Leu-tRNA-ligase"/>
</dbReference>
<dbReference type="InterPro" id="IPR025709">
    <property type="entry name" value="Leu_tRNA-synth_edit"/>
</dbReference>
<dbReference type="InterPro" id="IPR013155">
    <property type="entry name" value="M/V/L/I-tRNA-synth_anticd-bd"/>
</dbReference>
<dbReference type="InterPro" id="IPR015413">
    <property type="entry name" value="Methionyl/Leucyl_tRNA_Synth"/>
</dbReference>
<dbReference type="InterPro" id="IPR014729">
    <property type="entry name" value="Rossmann-like_a/b/a_fold"/>
</dbReference>
<dbReference type="InterPro" id="IPR009080">
    <property type="entry name" value="tRNAsynth_Ia_anticodon-bd"/>
</dbReference>
<dbReference type="InterPro" id="IPR009008">
    <property type="entry name" value="Val/Leu/Ile-tRNA-synth_edit"/>
</dbReference>
<dbReference type="NCBIfam" id="TIGR00396">
    <property type="entry name" value="leuS_bact"/>
    <property type="match status" value="1"/>
</dbReference>
<dbReference type="PANTHER" id="PTHR43740:SF2">
    <property type="entry name" value="LEUCINE--TRNA LIGASE, MITOCHONDRIAL"/>
    <property type="match status" value="1"/>
</dbReference>
<dbReference type="PANTHER" id="PTHR43740">
    <property type="entry name" value="LEUCYL-TRNA SYNTHETASE"/>
    <property type="match status" value="1"/>
</dbReference>
<dbReference type="Pfam" id="PF08264">
    <property type="entry name" value="Anticodon_1"/>
    <property type="match status" value="1"/>
</dbReference>
<dbReference type="Pfam" id="PF00133">
    <property type="entry name" value="tRNA-synt_1"/>
    <property type="match status" value="1"/>
</dbReference>
<dbReference type="Pfam" id="PF13603">
    <property type="entry name" value="tRNA-synt_1_2"/>
    <property type="match status" value="1"/>
</dbReference>
<dbReference type="Pfam" id="PF09334">
    <property type="entry name" value="tRNA-synt_1g"/>
    <property type="match status" value="1"/>
</dbReference>
<dbReference type="PRINTS" id="PR00985">
    <property type="entry name" value="TRNASYNTHLEU"/>
</dbReference>
<dbReference type="SUPFAM" id="SSF47323">
    <property type="entry name" value="Anticodon-binding domain of a subclass of class I aminoacyl-tRNA synthetases"/>
    <property type="match status" value="1"/>
</dbReference>
<dbReference type="SUPFAM" id="SSF52374">
    <property type="entry name" value="Nucleotidylyl transferase"/>
    <property type="match status" value="1"/>
</dbReference>
<dbReference type="SUPFAM" id="SSF50677">
    <property type="entry name" value="ValRS/IleRS/LeuRS editing domain"/>
    <property type="match status" value="1"/>
</dbReference>
<dbReference type="PROSITE" id="PS00178">
    <property type="entry name" value="AA_TRNA_LIGASE_I"/>
    <property type="match status" value="1"/>
</dbReference>
<accession>Q67SB4</accession>
<protein>
    <recommendedName>
        <fullName evidence="1">Leucine--tRNA ligase</fullName>
        <ecNumber evidence="1">6.1.1.4</ecNumber>
    </recommendedName>
    <alternativeName>
        <fullName evidence="1">Leucyl-tRNA synthetase</fullName>
        <shortName evidence="1">LeuRS</shortName>
    </alternativeName>
</protein>
<evidence type="ECO:0000255" key="1">
    <source>
        <dbReference type="HAMAP-Rule" id="MF_00049"/>
    </source>
</evidence>
<name>SYL_SYMTH</name>
<comment type="catalytic activity">
    <reaction evidence="1">
        <text>tRNA(Leu) + L-leucine + ATP = L-leucyl-tRNA(Leu) + AMP + diphosphate</text>
        <dbReference type="Rhea" id="RHEA:11688"/>
        <dbReference type="Rhea" id="RHEA-COMP:9613"/>
        <dbReference type="Rhea" id="RHEA-COMP:9622"/>
        <dbReference type="ChEBI" id="CHEBI:30616"/>
        <dbReference type="ChEBI" id="CHEBI:33019"/>
        <dbReference type="ChEBI" id="CHEBI:57427"/>
        <dbReference type="ChEBI" id="CHEBI:78442"/>
        <dbReference type="ChEBI" id="CHEBI:78494"/>
        <dbReference type="ChEBI" id="CHEBI:456215"/>
        <dbReference type="EC" id="6.1.1.4"/>
    </reaction>
</comment>
<comment type="subcellular location">
    <subcellularLocation>
        <location evidence="1">Cytoplasm</location>
    </subcellularLocation>
</comment>
<comment type="similarity">
    <text evidence="1">Belongs to the class-I aminoacyl-tRNA synthetase family.</text>
</comment>
<sequence>MAEERFDFREAEPRWQRRWDEEGIYKVERDLSRPKYYALAMFPYPSGKLHMGHVRNYTIVDVIARYRRMKGYNVLHPMGFDSFGMPAENAAIQHGANPAVWTRENIAEMTAQLKQMGYSYDWSRAVYTYREDYYRWTQWLFLQFYKKGLAYKKTAPVNWCPSCQTVLANEQVEDGRCWRCDSVVTKKDLAQWFFRITQYADELLEDLKLLEGGWPEQVRIMQQNWIGRSEGARVEFTLEATGDKIPIFTTRPDTIYGVTFMVVAPEHPIVEKICTSGLIPEERVAAIRAFQEKMKHLSEIARTSTEAEKEGLYTGLDVINPFNGEKAQLWIANYVLMDYGTGAVMGVPAHDQRDFEFAQKYGLPVKVVIQNPEGTLRAEEMTAAYVEPGIMVNSGPFDGTPNLEGIPKVIAYAEEQGFGQKTVSYRLRDWLISRQRAWGAPIPIVYCDKCGTVPVPEKDLPVRLPDDLDFTGEGGSPLARHEGFVNTTCPQCGGPARRETDTMDTFVCSSWYFLRYTDPQNAERPWNREDVDYWMPVDQYVGGIEHAVLHLLYARFFTKVLRDMGLVKVDEPFARLLTQGMVLKDGSKMSKSKGNTVSPEEMIAKYGADAVRLFIMFAAPPERDLDWSDAGIEGAARFVNRFYRMVVSALPAYQHARSLLPINPADPASVMGALSEAEIAEGLAKAAPNLTAEDRELRRVIHATVKRITADLHDRFAFNTAISGLMEMTNAIYAYREKQHAEQNTSALVLAEAVQKAVLIIAPFCPHLADELWSRMGHPRSIHLEPWPAYDEEVAKADTVEIVVQINGRVRDRLEVPAGISAAEMEAVAMASEKVQALVAGKQIVKVVPVPGKLVNIVVKG</sequence>
<proteinExistence type="inferred from homology"/>
<feature type="chain" id="PRO_0000152101" description="Leucine--tRNA ligase">
    <location>
        <begin position="1"/>
        <end position="861"/>
    </location>
</feature>
<feature type="short sequence motif" description="'HIGH' region">
    <location>
        <begin position="43"/>
        <end position="53"/>
    </location>
</feature>
<feature type="short sequence motif" description="'KMSKS' region">
    <location>
        <begin position="588"/>
        <end position="592"/>
    </location>
</feature>
<feature type="binding site" evidence="1">
    <location>
        <position position="591"/>
    </location>
    <ligand>
        <name>ATP</name>
        <dbReference type="ChEBI" id="CHEBI:30616"/>
    </ligand>
</feature>
<reference key="1">
    <citation type="journal article" date="2004" name="Nucleic Acids Res.">
        <title>Genome sequence of Symbiobacterium thermophilum, an uncultivable bacterium that depends on microbial commensalism.</title>
        <authorList>
            <person name="Ueda K."/>
            <person name="Yamashita A."/>
            <person name="Ishikawa J."/>
            <person name="Shimada M."/>
            <person name="Watsuji T."/>
            <person name="Morimura K."/>
            <person name="Ikeda H."/>
            <person name="Hattori M."/>
            <person name="Beppu T."/>
        </authorList>
    </citation>
    <scope>NUCLEOTIDE SEQUENCE [LARGE SCALE GENOMIC DNA]</scope>
    <source>
        <strain>DSM 24528 / JCM 14929 / IAM 14863 / T</strain>
    </source>
</reference>